<proteinExistence type="inferred from homology"/>
<reference key="1">
    <citation type="journal article" date="2011" name="J. Bacteriol.">
        <title>Comparative genomics of 28 Salmonella enterica isolates: evidence for CRISPR-mediated adaptive sublineage evolution.</title>
        <authorList>
            <person name="Fricke W.F."/>
            <person name="Mammel M.K."/>
            <person name="McDermott P.F."/>
            <person name="Tartera C."/>
            <person name="White D.G."/>
            <person name="Leclerc J.E."/>
            <person name="Ravel J."/>
            <person name="Cebula T.A."/>
        </authorList>
    </citation>
    <scope>NUCLEOTIDE SEQUENCE [LARGE SCALE GENOMIC DNA]</scope>
    <source>
        <strain>SL476</strain>
    </source>
</reference>
<keyword id="KW-0240">DNA-directed RNA polymerase</keyword>
<keyword id="KW-0548">Nucleotidyltransferase</keyword>
<keyword id="KW-0804">Transcription</keyword>
<keyword id="KW-0808">Transferase</keyword>
<organism>
    <name type="scientific">Salmonella heidelberg (strain SL476)</name>
    <dbReference type="NCBI Taxonomy" id="454169"/>
    <lineage>
        <taxon>Bacteria</taxon>
        <taxon>Pseudomonadati</taxon>
        <taxon>Pseudomonadota</taxon>
        <taxon>Gammaproteobacteria</taxon>
        <taxon>Enterobacterales</taxon>
        <taxon>Enterobacteriaceae</taxon>
        <taxon>Salmonella</taxon>
    </lineage>
</organism>
<name>RPOZ_SALHS</name>
<evidence type="ECO:0000255" key="1">
    <source>
        <dbReference type="HAMAP-Rule" id="MF_00366"/>
    </source>
</evidence>
<accession>B4T9Z3</accession>
<sequence length="91" mass="10237">MARVTVQDAVEKIGNRFDLVLVAARRARQMQVGGKDPLVPEENDKTTVIALREIEEGLINNQILDVRERQEQQEQEAAELQAVTAIAEGRR</sequence>
<dbReference type="EC" id="2.7.7.6" evidence="1"/>
<dbReference type="EMBL" id="CP001120">
    <property type="protein sequence ID" value="ACF68044.1"/>
    <property type="molecule type" value="Genomic_DNA"/>
</dbReference>
<dbReference type="RefSeq" id="WP_000135058.1">
    <property type="nucleotide sequence ID" value="NC_011083.1"/>
</dbReference>
<dbReference type="SMR" id="B4T9Z3"/>
<dbReference type="GeneID" id="98390719"/>
<dbReference type="KEGG" id="seh:SeHA_C4067"/>
<dbReference type="HOGENOM" id="CLU_125406_5_3_6"/>
<dbReference type="Proteomes" id="UP000001866">
    <property type="component" value="Chromosome"/>
</dbReference>
<dbReference type="GO" id="GO:0000428">
    <property type="term" value="C:DNA-directed RNA polymerase complex"/>
    <property type="evidence" value="ECO:0007669"/>
    <property type="project" value="UniProtKB-KW"/>
</dbReference>
<dbReference type="GO" id="GO:0003677">
    <property type="term" value="F:DNA binding"/>
    <property type="evidence" value="ECO:0007669"/>
    <property type="project" value="UniProtKB-UniRule"/>
</dbReference>
<dbReference type="GO" id="GO:0003899">
    <property type="term" value="F:DNA-directed RNA polymerase activity"/>
    <property type="evidence" value="ECO:0007669"/>
    <property type="project" value="UniProtKB-UniRule"/>
</dbReference>
<dbReference type="GO" id="GO:0006351">
    <property type="term" value="P:DNA-templated transcription"/>
    <property type="evidence" value="ECO:0007669"/>
    <property type="project" value="UniProtKB-UniRule"/>
</dbReference>
<dbReference type="FunFam" id="3.90.940.10:FF:000001">
    <property type="entry name" value="DNA-directed RNA polymerase subunit omega"/>
    <property type="match status" value="1"/>
</dbReference>
<dbReference type="Gene3D" id="3.90.940.10">
    <property type="match status" value="1"/>
</dbReference>
<dbReference type="HAMAP" id="MF_00366">
    <property type="entry name" value="RNApol_bact_RpoZ"/>
    <property type="match status" value="1"/>
</dbReference>
<dbReference type="InterPro" id="IPR003716">
    <property type="entry name" value="DNA-dir_RNA_pol_omega"/>
</dbReference>
<dbReference type="InterPro" id="IPR006110">
    <property type="entry name" value="Pol_omega/Rpo6/RPB6"/>
</dbReference>
<dbReference type="InterPro" id="IPR036161">
    <property type="entry name" value="RPB6/omega-like_sf"/>
</dbReference>
<dbReference type="NCBIfam" id="TIGR00690">
    <property type="entry name" value="rpoZ"/>
    <property type="match status" value="1"/>
</dbReference>
<dbReference type="PANTHER" id="PTHR34476">
    <property type="entry name" value="DNA-DIRECTED RNA POLYMERASE SUBUNIT OMEGA"/>
    <property type="match status" value="1"/>
</dbReference>
<dbReference type="PANTHER" id="PTHR34476:SF1">
    <property type="entry name" value="DNA-DIRECTED RNA POLYMERASE SUBUNIT OMEGA"/>
    <property type="match status" value="1"/>
</dbReference>
<dbReference type="Pfam" id="PF01192">
    <property type="entry name" value="RNA_pol_Rpb6"/>
    <property type="match status" value="1"/>
</dbReference>
<dbReference type="SMART" id="SM01409">
    <property type="entry name" value="RNA_pol_Rpb6"/>
    <property type="match status" value="1"/>
</dbReference>
<dbReference type="SUPFAM" id="SSF63562">
    <property type="entry name" value="RPB6/omega subunit-like"/>
    <property type="match status" value="1"/>
</dbReference>
<gene>
    <name evidence="1" type="primary">rpoZ</name>
    <name type="ordered locus">SeHA_C4067</name>
</gene>
<protein>
    <recommendedName>
        <fullName evidence="1">DNA-directed RNA polymerase subunit omega</fullName>
        <shortName evidence="1">RNAP omega subunit</shortName>
        <ecNumber evidence="1">2.7.7.6</ecNumber>
    </recommendedName>
    <alternativeName>
        <fullName evidence="1">RNA polymerase omega subunit</fullName>
    </alternativeName>
    <alternativeName>
        <fullName evidence="1">Transcriptase subunit omega</fullName>
    </alternativeName>
</protein>
<comment type="function">
    <text evidence="1">Promotes RNA polymerase assembly. Latches the N- and C-terminal regions of the beta' subunit thereby facilitating its interaction with the beta and alpha subunits.</text>
</comment>
<comment type="catalytic activity">
    <reaction evidence="1">
        <text>RNA(n) + a ribonucleoside 5'-triphosphate = RNA(n+1) + diphosphate</text>
        <dbReference type="Rhea" id="RHEA:21248"/>
        <dbReference type="Rhea" id="RHEA-COMP:14527"/>
        <dbReference type="Rhea" id="RHEA-COMP:17342"/>
        <dbReference type="ChEBI" id="CHEBI:33019"/>
        <dbReference type="ChEBI" id="CHEBI:61557"/>
        <dbReference type="ChEBI" id="CHEBI:140395"/>
        <dbReference type="EC" id="2.7.7.6"/>
    </reaction>
</comment>
<comment type="subunit">
    <text evidence="1">The RNAP catalytic core consists of 2 alpha, 1 beta, 1 beta' and 1 omega subunit. When a sigma factor is associated with the core the holoenzyme is formed, which can initiate transcription.</text>
</comment>
<comment type="similarity">
    <text evidence="1">Belongs to the RNA polymerase subunit omega family.</text>
</comment>
<feature type="chain" id="PRO_1000121268" description="DNA-directed RNA polymerase subunit omega">
    <location>
        <begin position="1"/>
        <end position="91"/>
    </location>
</feature>